<protein>
    <recommendedName>
        <fullName evidence="1">GTPase ObgE/CgtA</fullName>
        <ecNumber evidence="1 4 20">3.6.5.-</ecNumber>
    </recommendedName>
    <alternativeName>
        <fullName evidence="1">GTP-binding protein Obg</fullName>
    </alternativeName>
    <alternativeName>
        <fullName evidence="24">Large ribosomal subunit assembly factor ObgE</fullName>
    </alternativeName>
</protein>
<dbReference type="EC" id="3.6.5.-" evidence="1 4 20"/>
<dbReference type="EMBL" id="U18997">
    <property type="protein sequence ID" value="AAA57984.1"/>
    <property type="molecule type" value="Genomic_DNA"/>
</dbReference>
<dbReference type="EMBL" id="U00096">
    <property type="protein sequence ID" value="AAC76215.1"/>
    <property type="molecule type" value="Genomic_DNA"/>
</dbReference>
<dbReference type="EMBL" id="AP009048">
    <property type="protein sequence ID" value="BAE77227.1"/>
    <property type="molecule type" value="Genomic_DNA"/>
</dbReference>
<dbReference type="PIR" id="A65109">
    <property type="entry name" value="A65109"/>
</dbReference>
<dbReference type="RefSeq" id="NP_417650.1">
    <property type="nucleotide sequence ID" value="NC_000913.3"/>
</dbReference>
<dbReference type="RefSeq" id="WP_000673575.1">
    <property type="nucleotide sequence ID" value="NZ_LN832404.1"/>
</dbReference>
<dbReference type="PDB" id="4CSU">
    <property type="method" value="EM"/>
    <property type="resolution" value="5.50 A"/>
    <property type="chains" value="9=1-390"/>
</dbReference>
<dbReference type="PDB" id="5M04">
    <property type="method" value="X-ray"/>
    <property type="resolution" value="1.85 A"/>
    <property type="chains" value="A=1-340"/>
</dbReference>
<dbReference type="PDB" id="7BL2">
    <property type="method" value="EM"/>
    <property type="resolution" value="3.70 A"/>
    <property type="chains" value="9P1=1-390"/>
</dbReference>
<dbReference type="PDB" id="7BL3">
    <property type="method" value="EM"/>
    <property type="resolution" value="3.50 A"/>
    <property type="chains" value="9P=1-390"/>
</dbReference>
<dbReference type="PDB" id="7BL4">
    <property type="method" value="EM"/>
    <property type="resolution" value="2.40 A"/>
    <property type="chains" value="9=1-390"/>
</dbReference>
<dbReference type="PDB" id="7BL5">
    <property type="method" value="EM"/>
    <property type="resolution" value="3.30 A"/>
    <property type="chains" value="9=1-390"/>
</dbReference>
<dbReference type="PDB" id="7BL6">
    <property type="method" value="EM"/>
    <property type="resolution" value="4.00 A"/>
    <property type="chains" value="9=1-390"/>
</dbReference>
<dbReference type="PDB" id="8BFT">
    <property type="method" value="X-ray"/>
    <property type="resolution" value="1.19 A"/>
    <property type="chains" value="B=361-380"/>
</dbReference>
<dbReference type="PDBsum" id="4CSU"/>
<dbReference type="PDBsum" id="5M04"/>
<dbReference type="PDBsum" id="7BL2"/>
<dbReference type="PDBsum" id="7BL3"/>
<dbReference type="PDBsum" id="7BL4"/>
<dbReference type="PDBsum" id="7BL5"/>
<dbReference type="PDBsum" id="7BL6"/>
<dbReference type="PDBsum" id="8BFT"/>
<dbReference type="EMDB" id="EMD-12215"/>
<dbReference type="EMDB" id="EMD-12216"/>
<dbReference type="EMDB" id="EMD-12217"/>
<dbReference type="EMDB" id="EMD-12218"/>
<dbReference type="EMDB" id="EMD-12219"/>
<dbReference type="EMDB" id="EMD-2605"/>
<dbReference type="SASBDB" id="P42641"/>
<dbReference type="SMR" id="P42641"/>
<dbReference type="BioGRID" id="4261647">
    <property type="interactions" value="183"/>
</dbReference>
<dbReference type="BioGRID" id="852007">
    <property type="interactions" value="1"/>
</dbReference>
<dbReference type="DIP" id="DIP-12273N"/>
<dbReference type="FunCoup" id="P42641">
    <property type="interactions" value="818"/>
</dbReference>
<dbReference type="IntAct" id="P42641">
    <property type="interactions" value="28"/>
</dbReference>
<dbReference type="STRING" id="511145.b3183"/>
<dbReference type="jPOST" id="P42641"/>
<dbReference type="PaxDb" id="511145-b3183"/>
<dbReference type="EnsemblBacteria" id="AAC76215">
    <property type="protein sequence ID" value="AAC76215"/>
    <property type="gene ID" value="b3183"/>
</dbReference>
<dbReference type="GeneID" id="947694"/>
<dbReference type="KEGG" id="ecj:JW3150"/>
<dbReference type="KEGG" id="eco:b3183"/>
<dbReference type="KEGG" id="ecoc:C3026_17330"/>
<dbReference type="PATRIC" id="fig|1411691.4.peg.3548"/>
<dbReference type="EchoBASE" id="EB2647"/>
<dbReference type="eggNOG" id="COG0536">
    <property type="taxonomic scope" value="Bacteria"/>
</dbReference>
<dbReference type="HOGENOM" id="CLU_011747_2_0_6"/>
<dbReference type="InParanoid" id="P42641"/>
<dbReference type="OMA" id="VVFDWEP"/>
<dbReference type="OrthoDB" id="9807318at2"/>
<dbReference type="PhylomeDB" id="P42641"/>
<dbReference type="BioCyc" id="EcoCyc:G7656-MONOMER"/>
<dbReference type="BioCyc" id="MetaCyc:G7656-MONOMER"/>
<dbReference type="EvolutionaryTrace" id="P42641"/>
<dbReference type="PRO" id="PR:P42641"/>
<dbReference type="Proteomes" id="UP000000625">
    <property type="component" value="Chromosome"/>
</dbReference>
<dbReference type="GO" id="GO:0005829">
    <property type="term" value="C:cytosol"/>
    <property type="evidence" value="ECO:0000314"/>
    <property type="project" value="EcoCyc"/>
</dbReference>
<dbReference type="GO" id="GO:0003677">
    <property type="term" value="F:DNA binding"/>
    <property type="evidence" value="ECO:0007669"/>
    <property type="project" value="UniProtKB-KW"/>
</dbReference>
<dbReference type="GO" id="GO:0019003">
    <property type="term" value="F:GDP binding"/>
    <property type="evidence" value="ECO:0000314"/>
    <property type="project" value="EcoCyc"/>
</dbReference>
<dbReference type="GO" id="GO:0005525">
    <property type="term" value="F:GTP binding"/>
    <property type="evidence" value="ECO:0000314"/>
    <property type="project" value="EcoCyc"/>
</dbReference>
<dbReference type="GO" id="GO:0003924">
    <property type="term" value="F:GTPase activity"/>
    <property type="evidence" value="ECO:0000314"/>
    <property type="project" value="EcoCyc"/>
</dbReference>
<dbReference type="GO" id="GO:0097216">
    <property type="term" value="F:guanosine tetraphosphate binding"/>
    <property type="evidence" value="ECO:0000314"/>
    <property type="project" value="EcoCyc"/>
</dbReference>
<dbReference type="GO" id="GO:0032561">
    <property type="term" value="F:guanyl ribonucleotide binding"/>
    <property type="evidence" value="ECO:0000314"/>
    <property type="project" value="EcoCyc"/>
</dbReference>
<dbReference type="GO" id="GO:0000287">
    <property type="term" value="F:magnesium ion binding"/>
    <property type="evidence" value="ECO:0007669"/>
    <property type="project" value="InterPro"/>
</dbReference>
<dbReference type="GO" id="GO:0043023">
    <property type="term" value="F:ribosomal large subunit binding"/>
    <property type="evidence" value="ECO:0000314"/>
    <property type="project" value="EcoCyc"/>
</dbReference>
<dbReference type="GO" id="GO:0019843">
    <property type="term" value="F:rRNA binding"/>
    <property type="evidence" value="ECO:0007669"/>
    <property type="project" value="UniProtKB-KW"/>
</dbReference>
<dbReference type="GO" id="GO:0007059">
    <property type="term" value="P:chromosome segregation"/>
    <property type="evidence" value="ECO:0000315"/>
    <property type="project" value="EcoCyc"/>
</dbReference>
<dbReference type="GO" id="GO:0022611">
    <property type="term" value="P:dormancy process"/>
    <property type="evidence" value="ECO:0000314"/>
    <property type="project" value="UniProtKB"/>
</dbReference>
<dbReference type="GO" id="GO:0090071">
    <property type="term" value="P:negative regulation of ribosome biogenesis"/>
    <property type="evidence" value="ECO:0000314"/>
    <property type="project" value="EcoCyc"/>
</dbReference>
<dbReference type="GO" id="GO:0000027">
    <property type="term" value="P:ribosomal large subunit assembly"/>
    <property type="evidence" value="ECO:0000314"/>
    <property type="project" value="EcoCyc"/>
</dbReference>
<dbReference type="GO" id="GO:0042255">
    <property type="term" value="P:ribosome assembly"/>
    <property type="evidence" value="ECO:0000315"/>
    <property type="project" value="EcoCyc"/>
</dbReference>
<dbReference type="CDD" id="cd01898">
    <property type="entry name" value="Obg"/>
    <property type="match status" value="1"/>
</dbReference>
<dbReference type="FunFam" id="2.70.210.12:FF:000001">
    <property type="entry name" value="GTPase Obg"/>
    <property type="match status" value="1"/>
</dbReference>
<dbReference type="FunFam" id="3.40.50.300:FF:000185">
    <property type="entry name" value="GTPase Obg"/>
    <property type="match status" value="1"/>
</dbReference>
<dbReference type="Gene3D" id="2.70.210.12">
    <property type="entry name" value="GTP1/OBG domain"/>
    <property type="match status" value="1"/>
</dbReference>
<dbReference type="Gene3D" id="3.40.50.300">
    <property type="entry name" value="P-loop containing nucleotide triphosphate hydrolases"/>
    <property type="match status" value="1"/>
</dbReference>
<dbReference type="HAMAP" id="MF_01454">
    <property type="entry name" value="GTPase_Obg"/>
    <property type="match status" value="1"/>
</dbReference>
<dbReference type="InterPro" id="IPR031167">
    <property type="entry name" value="G_OBG"/>
</dbReference>
<dbReference type="InterPro" id="IPR006073">
    <property type="entry name" value="GTP-bd"/>
</dbReference>
<dbReference type="InterPro" id="IPR014100">
    <property type="entry name" value="GTP-bd_Obg/CgtA"/>
</dbReference>
<dbReference type="InterPro" id="IPR006074">
    <property type="entry name" value="GTP1-OBG_CS"/>
</dbReference>
<dbReference type="InterPro" id="IPR006169">
    <property type="entry name" value="GTP1_OBG_dom"/>
</dbReference>
<dbReference type="InterPro" id="IPR036726">
    <property type="entry name" value="GTP1_OBG_dom_sf"/>
</dbReference>
<dbReference type="InterPro" id="IPR045086">
    <property type="entry name" value="OBG_GTPase"/>
</dbReference>
<dbReference type="InterPro" id="IPR027417">
    <property type="entry name" value="P-loop_NTPase"/>
</dbReference>
<dbReference type="NCBIfam" id="TIGR02729">
    <property type="entry name" value="Obg_CgtA"/>
    <property type="match status" value="1"/>
</dbReference>
<dbReference type="NCBIfam" id="NF008955">
    <property type="entry name" value="PRK12297.1"/>
    <property type="match status" value="1"/>
</dbReference>
<dbReference type="NCBIfam" id="NF008956">
    <property type="entry name" value="PRK12299.1"/>
    <property type="match status" value="1"/>
</dbReference>
<dbReference type="PANTHER" id="PTHR11702">
    <property type="entry name" value="DEVELOPMENTALLY REGULATED GTP-BINDING PROTEIN-RELATED"/>
    <property type="match status" value="1"/>
</dbReference>
<dbReference type="PANTHER" id="PTHR11702:SF31">
    <property type="entry name" value="MITOCHONDRIAL RIBOSOME-ASSOCIATED GTPASE 2"/>
    <property type="match status" value="1"/>
</dbReference>
<dbReference type="Pfam" id="PF01018">
    <property type="entry name" value="GTP1_OBG"/>
    <property type="match status" value="1"/>
</dbReference>
<dbReference type="Pfam" id="PF01926">
    <property type="entry name" value="MMR_HSR1"/>
    <property type="match status" value="1"/>
</dbReference>
<dbReference type="PIRSF" id="PIRSF002401">
    <property type="entry name" value="GTP_bd_Obg/CgtA"/>
    <property type="match status" value="1"/>
</dbReference>
<dbReference type="PRINTS" id="PR00326">
    <property type="entry name" value="GTP1OBG"/>
</dbReference>
<dbReference type="SUPFAM" id="SSF82051">
    <property type="entry name" value="Obg GTP-binding protein N-terminal domain"/>
    <property type="match status" value="1"/>
</dbReference>
<dbReference type="SUPFAM" id="SSF52540">
    <property type="entry name" value="P-loop containing nucleoside triphosphate hydrolases"/>
    <property type="match status" value="1"/>
</dbReference>
<dbReference type="PROSITE" id="PS51710">
    <property type="entry name" value="G_OBG"/>
    <property type="match status" value="1"/>
</dbReference>
<dbReference type="PROSITE" id="PS00905">
    <property type="entry name" value="GTP1_OBG"/>
    <property type="match status" value="1"/>
</dbReference>
<dbReference type="PROSITE" id="PS51883">
    <property type="entry name" value="OBG"/>
    <property type="match status" value="1"/>
</dbReference>
<keyword id="KW-0002">3D-structure</keyword>
<keyword id="KW-0963">Cytoplasm</keyword>
<keyword id="KW-0238">DNA-binding</keyword>
<keyword id="KW-0342">GTP-binding</keyword>
<keyword id="KW-0378">Hydrolase</keyword>
<keyword id="KW-0460">Magnesium</keyword>
<keyword id="KW-0479">Metal-binding</keyword>
<keyword id="KW-0547">Nucleotide-binding</keyword>
<keyword id="KW-1185">Reference proteome</keyword>
<keyword id="KW-0690">Ribosome biogenesis</keyword>
<keyword id="KW-0694">RNA-binding</keyword>
<keyword id="KW-0699">rRNA-binding</keyword>
<accession>P42641</accession>
<accession>Q2M929</accession>
<feature type="chain" id="PRO_0000205433" description="GTPase ObgE/CgtA">
    <location>
        <begin position="1"/>
        <end position="390"/>
    </location>
</feature>
<feature type="domain" description="Obg" evidence="2">
    <location>
        <begin position="1"/>
        <end position="159"/>
    </location>
</feature>
<feature type="domain" description="OBG-type G" evidence="1">
    <location>
        <begin position="160"/>
        <end position="333"/>
    </location>
</feature>
<feature type="domain" description="G" evidence="1">
    <location>
        <begin position="162"/>
        <end position="284"/>
    </location>
</feature>
<feature type="region of interest" description="Disordered" evidence="3">
    <location>
        <begin position="127"/>
        <end position="147"/>
    </location>
</feature>
<feature type="region of interest" description="Not required for 50S ribosome subunit association nor 70S dissociation" evidence="18">
    <location>
        <begin position="341"/>
        <end position="390"/>
    </location>
</feature>
<feature type="region of interest" description="Not essential, but deletion increases sensitivity to DNA replication inhibitor hydroxyurea (HU)" evidence="17">
    <location>
        <begin position="360"/>
        <end position="390"/>
    </location>
</feature>
<feature type="compositionally biased region" description="Polar residues" evidence="3">
    <location>
        <begin position="129"/>
        <end position="145"/>
    </location>
</feature>
<feature type="binding site" evidence="1">
    <location>
        <begin position="166"/>
        <end position="173"/>
    </location>
    <ligand>
        <name>GTP</name>
        <dbReference type="ChEBI" id="CHEBI:37565"/>
    </ligand>
</feature>
<feature type="binding site" evidence="1">
    <location>
        <position position="173"/>
    </location>
    <ligand>
        <name>Mg(2+)</name>
        <dbReference type="ChEBI" id="CHEBI:18420"/>
    </ligand>
</feature>
<feature type="binding site" evidence="1">
    <location>
        <begin position="191"/>
        <end position="195"/>
    </location>
    <ligand>
        <name>GTP</name>
        <dbReference type="ChEBI" id="CHEBI:37565"/>
    </ligand>
</feature>
<feature type="binding site" evidence="1">
    <location>
        <position position="193"/>
    </location>
    <ligand>
        <name>Mg(2+)</name>
        <dbReference type="ChEBI" id="CHEBI:18420"/>
    </ligand>
</feature>
<feature type="binding site" evidence="1">
    <location>
        <begin position="213"/>
        <end position="216"/>
    </location>
    <ligand>
        <name>GTP</name>
        <dbReference type="ChEBI" id="CHEBI:37565"/>
    </ligand>
</feature>
<feature type="binding site" evidence="1">
    <location>
        <begin position="283"/>
        <end position="286"/>
    </location>
    <ligand>
        <name>GTP</name>
        <dbReference type="ChEBI" id="CHEBI:37565"/>
    </ligand>
</feature>
<feature type="binding site" evidence="1">
    <location>
        <begin position="314"/>
        <end position="316"/>
    </location>
    <ligand>
        <name>GTP</name>
        <dbReference type="ChEBI" id="CHEBI:37565"/>
    </ligand>
</feature>
<feature type="mutagenesis site" description="Slight increase in accumulation of pre-50S ribosomal subunit." evidence="20">
    <original>R</original>
    <variation>A</variation>
    <location>
        <position position="25"/>
    </location>
</feature>
<feature type="mutagenesis site" description="Almost abolishes 50S subunit binding." evidence="18">
    <original>KYIPK</original>
    <variation>EYIPE</variation>
    <location>
        <begin position="27"/>
        <end position="31"/>
    </location>
</feature>
<feature type="mutagenesis site" description="Slight increase in accumulation of pre-50S ribosomal subunit." evidence="20">
    <original>R</original>
    <variation>A</variation>
    <location>
        <position position="60"/>
    </location>
</feature>
<feature type="mutagenesis site" description="Slight reduction in 50S subunit binding." evidence="18">
    <original>RDCTGKR</original>
    <variation>GDCTGKG</variation>
    <location>
        <begin position="76"/>
        <end position="82"/>
    </location>
</feature>
<feature type="mutagenesis site" description="Temperature-sensitive for growth at 42 degrees Celsius, defects in chromosome partitioning; when associated with N-85." evidence="4">
    <original>G</original>
    <variation>E</variation>
    <location>
        <position position="80"/>
    </location>
</feature>
<feature type="mutagenesis site" description="Temperature-sensitive for growth at 42 degrees Celsius, defects in chromosome partitioning; when associated with E-80." evidence="4">
    <original>D</original>
    <variation>N</variation>
    <location>
        <position position="85"/>
    </location>
</feature>
<feature type="mutagenesis site" description="No effect on persister cell formation upon overexpression." evidence="19">
    <original>G</original>
    <variation>D</variation>
    <location>
        <position position="93"/>
    </location>
</feature>
<feature type="mutagenesis site" description="Almost abolishes 50S subunit binding." evidence="18">
    <original>RTPR</original>
    <variation>GTPG</variation>
    <location>
        <begin position="136"/>
        <end position="139"/>
    </location>
</feature>
<feature type="mutagenesis site" description="Increased sensitivity to HU upon overexpression, supports normal growth, no effect in mazEF/relBE or tonB deletions." evidence="17">
    <original>L</original>
    <variation>Q</variation>
    <location>
        <position position="159"/>
    </location>
</feature>
<feature type="mutagenesis site" description="Increased sensitivity to HU upon overexpression, supports normal growth, no effect in mazEF/relBE or tonB deletions." evidence="17">
    <original>G</original>
    <variation>V</variation>
    <location>
        <position position="163"/>
    </location>
</feature>
<feature type="mutagenesis site" description="No increase in persister cells upon overexpression, does not induce hokB expression, supports normal growth." evidence="19">
    <original>G</original>
    <variation>V</variation>
    <location>
        <position position="166"/>
    </location>
</feature>
<feature type="mutagenesis site" description="Increased sensitivity to HU upon overexpression, supports normal growth, no effect in mazEF/relBE or tonB deletions. No effect on persister cell formation upon overexpression." evidence="10 17 19">
    <original>P</original>
    <variation>V</variation>
    <location>
        <position position="168"/>
    </location>
</feature>
<feature type="mutagenesis site" description="No effect on persister cell formation upon overexpression." evidence="19">
    <original>S</original>
    <variation>N</variation>
    <location>
        <position position="173"/>
    </location>
</feature>
<feature type="mutagenesis site" description="No effect on persister cell formation upon overexpression." evidence="19">
    <original>T</original>
    <variation>A</variation>
    <location>
        <position position="193"/>
    </location>
</feature>
<feature type="mutagenesis site" description="Increased sensitivity to HU upon overexpression, supports normal growth, no effect in mazEF/relBE or tonB deletions. No effect on persister cell formation upon overexpression." evidence="17 19">
    <original>G</original>
    <variation>A</variation>
    <location>
        <position position="216"/>
    </location>
</feature>
<feature type="mutagenesis site" description="Increased sensitivity to HU upon overexpression, supports normal growth, no effect in mazEF/relBE or tonB deletions." evidence="17">
    <original>R</original>
    <variation>C</variation>
    <location>
        <position position="237"/>
    </location>
</feature>
<feature type="mutagenesis site" description="Severe growth defect at 42 degrees Celsius. Decreased levels of some ribosomal proteins, altered PTMs of others." evidence="11">
    <original>S</original>
    <variation>P</variation>
    <location>
        <position position="314"/>
    </location>
</feature>
<feature type="strand" evidence="33">
    <location>
        <begin position="2"/>
        <end position="12"/>
    </location>
</feature>
<feature type="strand" evidence="33">
    <location>
        <begin position="27"/>
        <end position="29"/>
    </location>
</feature>
<feature type="strand" evidence="33">
    <location>
        <begin position="45"/>
        <end position="49"/>
    </location>
</feature>
<feature type="helix" evidence="33">
    <location>
        <begin position="57"/>
        <end position="60"/>
    </location>
</feature>
<feature type="strand" evidence="33">
    <location>
        <begin position="64"/>
        <end position="66"/>
    </location>
</feature>
<feature type="turn" evidence="33">
    <location>
        <begin position="75"/>
        <end position="77"/>
    </location>
</feature>
<feature type="strand" evidence="33">
    <location>
        <begin position="86"/>
        <end position="90"/>
    </location>
</feature>
<feature type="strand" evidence="33">
    <location>
        <begin position="94"/>
        <end position="98"/>
    </location>
</feature>
<feature type="turn" evidence="33">
    <location>
        <begin position="99"/>
        <end position="101"/>
    </location>
</feature>
<feature type="strand" evidence="33">
    <location>
        <begin position="104"/>
        <end position="108"/>
    </location>
</feature>
<feature type="strand" evidence="33">
    <location>
        <begin position="114"/>
        <end position="118"/>
    </location>
</feature>
<feature type="helix" evidence="33">
    <location>
        <begin position="127"/>
        <end position="130"/>
    </location>
</feature>
<feature type="turn" evidence="35">
    <location>
        <begin position="133"/>
        <end position="135"/>
    </location>
</feature>
<feature type="strand" evidence="33">
    <location>
        <begin position="149"/>
        <end position="157"/>
    </location>
</feature>
<feature type="strand" evidence="33">
    <location>
        <begin position="161"/>
        <end position="165"/>
    </location>
</feature>
<feature type="helix" evidence="33">
    <location>
        <begin position="172"/>
        <end position="179"/>
    </location>
</feature>
<feature type="strand" evidence="33">
    <location>
        <begin position="185"/>
        <end position="188"/>
    </location>
</feature>
<feature type="strand" evidence="33">
    <location>
        <begin position="192"/>
        <end position="194"/>
    </location>
</feature>
<feature type="strand" evidence="33">
    <location>
        <begin position="198"/>
        <end position="204"/>
    </location>
</feature>
<feature type="strand" evidence="33">
    <location>
        <begin position="207"/>
        <end position="213"/>
    </location>
</feature>
<feature type="helix" evidence="33">
    <location>
        <begin position="214"/>
        <end position="218"/>
    </location>
</feature>
<feature type="strand" evidence="33">
    <location>
        <begin position="221"/>
        <end position="223"/>
    </location>
</feature>
<feature type="helix" evidence="33">
    <location>
        <begin position="226"/>
        <end position="233"/>
    </location>
</feature>
<feature type="helix" evidence="33">
    <location>
        <begin position="234"/>
        <end position="237"/>
    </location>
</feature>
<feature type="strand" evidence="33">
    <location>
        <begin position="240"/>
        <end position="248"/>
    </location>
</feature>
<feature type="turn" evidence="34">
    <location>
        <begin position="250"/>
        <end position="252"/>
    </location>
</feature>
<feature type="helix" evidence="33">
    <location>
        <begin position="255"/>
        <end position="269"/>
    </location>
</feature>
<feature type="helix" evidence="33">
    <location>
        <begin position="271"/>
        <end position="274"/>
    </location>
</feature>
<feature type="strand" evidence="33">
    <location>
        <begin position="278"/>
        <end position="283"/>
    </location>
</feature>
<feature type="helix" evidence="33">
    <location>
        <begin position="285"/>
        <end position="287"/>
    </location>
</feature>
<feature type="helix" evidence="33">
    <location>
        <begin position="290"/>
        <end position="303"/>
    </location>
</feature>
<feature type="turn" evidence="33">
    <location>
        <begin position="315"/>
        <end position="317"/>
    </location>
</feature>
<feature type="helix" evidence="33">
    <location>
        <begin position="321"/>
        <end position="334"/>
    </location>
</feature>
<feature type="turn" evidence="36">
    <location>
        <begin position="376"/>
        <end position="379"/>
    </location>
</feature>
<organism>
    <name type="scientific">Escherichia coli (strain K12)</name>
    <dbReference type="NCBI Taxonomy" id="83333"/>
    <lineage>
        <taxon>Bacteria</taxon>
        <taxon>Pseudomonadati</taxon>
        <taxon>Pseudomonadota</taxon>
        <taxon>Gammaproteobacteria</taxon>
        <taxon>Enterobacterales</taxon>
        <taxon>Enterobacteriaceae</taxon>
        <taxon>Escherichia</taxon>
    </lineage>
</organism>
<proteinExistence type="evidence at protein level"/>
<evidence type="ECO:0000255" key="1">
    <source>
        <dbReference type="HAMAP-Rule" id="MF_01454"/>
    </source>
</evidence>
<evidence type="ECO:0000255" key="2">
    <source>
        <dbReference type="PROSITE-ProRule" id="PRU01231"/>
    </source>
</evidence>
<evidence type="ECO:0000256" key="3">
    <source>
        <dbReference type="SAM" id="MobiDB-lite"/>
    </source>
</evidence>
<evidence type="ECO:0000269" key="4">
    <source>
    </source>
</evidence>
<evidence type="ECO:0000269" key="5">
    <source>
    </source>
</evidence>
<evidence type="ECO:0000269" key="6">
    <source>
    </source>
</evidence>
<evidence type="ECO:0000269" key="7">
    <source>
    </source>
</evidence>
<evidence type="ECO:0000269" key="8">
    <source>
    </source>
</evidence>
<evidence type="ECO:0000269" key="9">
    <source>
    </source>
</evidence>
<evidence type="ECO:0000269" key="10">
    <source>
    </source>
</evidence>
<evidence type="ECO:0000269" key="11">
    <source>
    </source>
</evidence>
<evidence type="ECO:0000269" key="12">
    <source>
    </source>
</evidence>
<evidence type="ECO:0000269" key="13">
    <source>
    </source>
</evidence>
<evidence type="ECO:0000269" key="14">
    <source>
    </source>
</evidence>
<evidence type="ECO:0000269" key="15">
    <source>
    </source>
</evidence>
<evidence type="ECO:0000269" key="16">
    <source>
    </source>
</evidence>
<evidence type="ECO:0000269" key="17">
    <source>
    </source>
</evidence>
<evidence type="ECO:0000269" key="18">
    <source>
    </source>
</evidence>
<evidence type="ECO:0000269" key="19">
    <source>
    </source>
</evidence>
<evidence type="ECO:0000269" key="20">
    <source>
    </source>
</evidence>
<evidence type="ECO:0000269" key="21">
    <source>
    </source>
</evidence>
<evidence type="ECO:0000303" key="22">
    <source>
    </source>
</evidence>
<evidence type="ECO:0000303" key="23">
    <source>
    </source>
</evidence>
<evidence type="ECO:0000303" key="24">
    <source>
    </source>
</evidence>
<evidence type="ECO:0000305" key="25">
    <source>
    </source>
</evidence>
<evidence type="ECO:0000305" key="26">
    <source>
    </source>
</evidence>
<evidence type="ECO:0007744" key="27">
    <source>
        <dbReference type="PDB" id="4CSU"/>
    </source>
</evidence>
<evidence type="ECO:0007744" key="28">
    <source>
        <dbReference type="PDB" id="7BL2"/>
    </source>
</evidence>
<evidence type="ECO:0007744" key="29">
    <source>
        <dbReference type="PDB" id="7BL3"/>
    </source>
</evidence>
<evidence type="ECO:0007744" key="30">
    <source>
        <dbReference type="PDB" id="7BL4"/>
    </source>
</evidence>
<evidence type="ECO:0007744" key="31">
    <source>
        <dbReference type="PDB" id="7BL5"/>
    </source>
</evidence>
<evidence type="ECO:0007744" key="32">
    <source>
        <dbReference type="PDB" id="7BL6"/>
    </source>
</evidence>
<evidence type="ECO:0007829" key="33">
    <source>
        <dbReference type="PDB" id="5M04"/>
    </source>
</evidence>
<evidence type="ECO:0007829" key="34">
    <source>
        <dbReference type="PDB" id="7BL4"/>
    </source>
</evidence>
<evidence type="ECO:0007829" key="35">
    <source>
        <dbReference type="PDB" id="7BL5"/>
    </source>
</evidence>
<evidence type="ECO:0007829" key="36">
    <source>
        <dbReference type="PDB" id="8BFT"/>
    </source>
</evidence>
<gene>
    <name evidence="22" type="primary">obgE</name>
    <name evidence="23" type="synonym">cgtA</name>
    <name evidence="1" type="synonym">obg</name>
    <name type="synonym">yhbZ</name>
    <name type="ordered locus">b3183</name>
    <name type="ordered locus">JW3150</name>
</gene>
<comment type="function">
    <text evidence="1">An essential GTPase which binds GTP, GDP and possibly (p)ppGpp with moderate affinity, with high nucleotide exchange rates and a fairly low GTP hydrolysis rate. Plays a role in control of the cell cycle, stress response, ribosome biogenesis and in those bacteria that undergo differentiation, in morphogenesis control.</text>
</comment>
<comment type="function">
    <text evidence="4 5 6 11 13 14 15 16 18 19 20">Required for chromosome segregation (PubMed:11555285). Plays a role in the stringent response, perhaps by sequestering 50S ribosomal subunits and decreasing protein synthesis (PubMed:19555460). Has a non-essential role in the late steps of ribosome biogenesis, coordinating 50S ribosomal subunit assembly (PubMed:24844575, PubMed:33639093). Has high guanosine nucleotide exchange rate constants for GTP and GDP, and a relatively low GTP hydrolysis rate stimulated by the 50S ribosomal subunit. It is estimated there are 34000 molecules in log-phase cells and 5600 molecules in stationary-phase cells. Overexpression increases bacterial persistence (in exponential and stationary phase) in response to antibiotics (PubMed:26051177). Cells expressing high levels of ObgE are more likely to form persister cells upon antibiotic exposure; this requires alarmone (p)ppGpp and acts via induced HokB, depolarizing cells, which probably reduces metabolic activity and induces persistence (PubMed:26051177). The persister phenotype can be separated from the essential phenotype (PubMed:26051177).</text>
</comment>
<comment type="function">
    <text evidence="4 6 7 8 10 12 14 17">Required for correct chromosome partitioning; in temperature-sensitive (ts) mutant nucleoids do not partition but remain in the middle of cell, cells elongate but do not divide (PubMed:11555285). Overexpression protects cells against UV damage. Ts mutants have impaired plasmid and lamdba phage replication, possibly via effects on DnaA (PubMed:12826057). Regulates DnaA levels (PubMed:16518617). Genetic interactions of Val-168 and a C-terminal insertion mutant with the double-strand break repair factors recA and recBCD, and with seqA suggests that ObgE, either directly or indirectly, promotes replication fork stability (PubMed:15721258). May protect replication forks from stress induced by toxic levels of hydroxyl radicals (PubMed:22863262). Initiation of DNA replication continues in ObgE-depleted cells.</text>
</comment>
<comment type="function">
    <text evidence="4 5 9 11 13 15 16 18 20 26">Central member of a network of 50S ribosomal subunit biogenesis factors (ObgE, RluD, RsfS and DarP(YjgA)) which assembles along the 30S-50S interface, preventing incorrect 23S rRNA structures from forming (PubMed:33639093). Acts as a ribosome anti-association factor; guanosine nucleotides stimulate ObgE 50S subunit binding and also ObgE-mediated 70S ribosome dissociation (GDP&lt;GTP&lt;GMP-PNP&lt;ppGpp) (PubMed:24844575). Overexpression rescues an rrmJ deletion, stabilizing the 70S ribosome. Even at permissive temperatures the ts mutant (Gln-80/Asn-85) shows disrupted 50S ribosomal subunit assembly, defects in 16 and 23S rRNA processing and altered association of some late-assembling ribosomal proteins (PubMed:11555285). Dissociates from the pre-50S ribosome under conditions of amino acid starvation. The levels of (p)ppGpp rise in the ts mutant (Gln-80/Asn-85), possibly because ObgE controls SpoT. Binds GDP and ppGpp with the same affinity. During ribosome assembly ObgE acts later than the rRNA methyltransferase RrmJ and DEAD-box RNA helicases DeaD and SrmB (PubMed:16980477). Promotes and stabilizes nearly mature conformations of 23S rRNA in late stage pre-50S ribosomal subunits, which may allow integration of late ribosomal proteins uL16 (rplP) and bL36 (rpmJ) (PubMed:33639093). When the 50S subunit is fully assembled (perhaps signalled by the simultaneous presence of uL16 and bL36), changes take place in ObgE that stimulate GTP hydrolysis by ObgE and ultimately lead to its dissociation from the 50S particle (Probable) (PubMed:33639093).</text>
</comment>
<comment type="cofactor">
    <cofactor evidence="1 25">
        <name>Mg(2+)</name>
        <dbReference type="ChEBI" id="CHEBI:18420"/>
    </cofactor>
</comment>
<comment type="biophysicochemical properties">
    <kinetics>
        <KM evidence="5 9">18 uM for GTP (at 37 degrees Celsius)</KM>
        <KM evidence="5 9">7.9 uM for GTP (at 30 degrees Celsius)</KM>
        <text>Turnover number of 0.02/min.</text>
    </kinetics>
</comment>
<comment type="subunit">
    <text evidence="1 4 9 11 15 18 20">Monomer. Binds to the intersubunit face of the 50S ribosomal subunit where translation factors bind, protruding into the peptidyl-transfer center, leading to significant changes in both ObgE and 50S ribosome structure (PubMed:24844575, PubMed:33639093). Associates with SpoT (PubMed:15292126, PubMed:17616600). Binding to 50S ribosomes does not require SpoT. 50S ribosomal subunit binding is enhanced by guanosine nucleotides (PubMed:24844575). In the pre-50S ribosomal subunit interacts with assembly factors RluD and RsfS (PubMed:33639093).</text>
</comment>
<comment type="interaction">
    <interactant intactId="EBI-370839">
        <id>P42641</id>
    </interactant>
    <interactant intactId="EBI-543702">
        <id>P0A7K2</id>
        <label>rplL</label>
    </interactant>
    <organismsDiffer>false</organismsDiffer>
    <experiments>3</experiments>
</comment>
<comment type="subcellular location">
    <subcellularLocation>
        <location evidence="1 9 20">Cytoplasm</location>
    </subcellularLocation>
    <text evidence="9 11 20">Low amounts associate with pre-50S ribosomal subunits (PubMed:15292126, PubMed:33639093). Another group also sees association with 30S subunit (PubMed:15836769).</text>
</comment>
<comment type="induction">
    <text evidence="8 11">Constitutively expressed, levels decrease toward stationary phase (at protein level). Induced in a dose-dependent manner by UV irradiation.</text>
</comment>
<comment type="domain">
    <text evidence="18">The C-terminus (residues 341-390) is not required for either 50S ribosome subunit association nor 70S ribosome dissociation.</text>
</comment>
<comment type="disruption phenotype">
    <text evidence="21">Essential for growth, it cannot be disrupted.</text>
</comment>
<comment type="similarity">
    <text evidence="1">Belongs to the TRAFAC class OBG-HflX-like GTPase superfamily. OBG GTPase family.</text>
</comment>
<reference key="1">
    <citation type="journal article" date="1997" name="Science">
        <title>The complete genome sequence of Escherichia coli K-12.</title>
        <authorList>
            <person name="Blattner F.R."/>
            <person name="Plunkett G. III"/>
            <person name="Bloch C.A."/>
            <person name="Perna N.T."/>
            <person name="Burland V."/>
            <person name="Riley M."/>
            <person name="Collado-Vides J."/>
            <person name="Glasner J.D."/>
            <person name="Rode C.K."/>
            <person name="Mayhew G.F."/>
            <person name="Gregor J."/>
            <person name="Davis N.W."/>
            <person name="Kirkpatrick H.A."/>
            <person name="Goeden M.A."/>
            <person name="Rose D.J."/>
            <person name="Mau B."/>
            <person name="Shao Y."/>
        </authorList>
    </citation>
    <scope>NUCLEOTIDE SEQUENCE [LARGE SCALE GENOMIC DNA]</scope>
    <source>
        <strain>K12 / MG1655 / ATCC 47076</strain>
    </source>
</reference>
<reference key="2">
    <citation type="journal article" date="2006" name="Mol. Syst. Biol.">
        <title>Highly accurate genome sequences of Escherichia coli K-12 strains MG1655 and W3110.</title>
        <authorList>
            <person name="Hayashi K."/>
            <person name="Morooka N."/>
            <person name="Yamamoto Y."/>
            <person name="Fujita K."/>
            <person name="Isono K."/>
            <person name="Choi S."/>
            <person name="Ohtsubo E."/>
            <person name="Baba T."/>
            <person name="Wanner B.L."/>
            <person name="Mori H."/>
            <person name="Horiuchi T."/>
        </authorList>
    </citation>
    <scope>NUCLEOTIDE SEQUENCE [LARGE SCALE GENOMIC DNA]</scope>
    <source>
        <strain>K12 / W3110 / ATCC 27325 / DSM 5911</strain>
    </source>
</reference>
<reference key="3">
    <citation type="journal article" date="1998" name="Nat. Biotechnol.">
        <title>A genome-based approach for the identification of essential bacterial genes.</title>
        <authorList>
            <person name="Arigoni F."/>
            <person name="Talabot F."/>
            <person name="Peitsch M.C."/>
            <person name="Edgerton M.D."/>
            <person name="Meldrum E."/>
            <person name="Allet E."/>
            <person name="Fish R."/>
            <person name="Jamotte T."/>
            <person name="Curchod M.-L."/>
            <person name="Loferer H."/>
        </authorList>
    </citation>
    <scope>DISRUPTION PHENOTYPE</scope>
    <source>
        <strain>K12 / MG1655 / ATCC 47076</strain>
    </source>
</reference>
<reference key="4">
    <citation type="journal article" date="2001" name="Mol. Microbiol.">
        <title>Deficiency of essential GTP-binding protein ObgE in Escherichia coli inhibits chromosome partition.</title>
        <authorList>
            <person name="Kobayashi G."/>
            <person name="Moriya S."/>
            <person name="Wada C."/>
        </authorList>
    </citation>
    <scope>FUNCTION IN CHROMOSOME PARTITIONING</scope>
    <scope>GTPASE-ACTIVITY</scope>
    <scope>DNA-BINDING</scope>
    <scope>SUBUNIT</scope>
    <scope>POSSIBLE COFACTOR</scope>
    <scope>MUTAGENESIS OF GLY-80 AND ASP-85</scope>
    <source>
        <strain>K12 / MG1655 / ATCC 47076</strain>
    </source>
</reference>
<reference key="5">
    <citation type="journal article" date="2002" name="Curr. Microbiol.">
        <title>Overexpression of the cgtA (yhbZ, obgE) gene, coding for an essential GTP-binding protein, impairs the regulation of chromosomal functions in Escherichia coli.</title>
        <authorList>
            <person name="Dutkiewicz R."/>
            <person name="Slominska M."/>
            <person name="Wegrzyn G."/>
            <person name="Czyz A."/>
        </authorList>
    </citation>
    <scope>FUNCTION</scope>
    <source>
        <strain>K12 / MG1655 / ATCC 47076</strain>
    </source>
</reference>
<reference key="6">
    <citation type="journal article" date="2002" name="J. Bacteriol.">
        <title>Overexpression of two different GTPases rescues a null mutation in a heat-induced rRNA methyltransferase.</title>
        <authorList>
            <person name="Tan J."/>
            <person name="Jakob U."/>
            <person name="Bardwell J.C.A."/>
        </authorList>
    </citation>
    <scope>FUNCTION</scope>
    <scope>BIOPHYSICOCHEMICAL PROPERTIES</scope>
    <source>
        <strain>K12 / MG1655 / ATCC 47076</strain>
    </source>
</reference>
<reference key="7">
    <citation type="journal article" date="2003" name="Microbiology">
        <title>Involvement of the cgtA gene function in stimulation of DNA repair in Escherichia coli and Vibrio harveyi.</title>
        <authorList>
            <person name="Zielke R."/>
            <person name="Sikora A."/>
            <person name="Dutkiewicz R."/>
            <person name="Wegrzyn G."/>
            <person name="Czyz A."/>
        </authorList>
    </citation>
    <scope>FUNCTION</scope>
    <scope>INDUCTION</scope>
    <source>
        <strain>K12 / MG1655 / ATCC 47076</strain>
    </source>
</reference>
<reference key="8">
    <citation type="journal article" date="2003" name="Plasmid">
        <title>Role of the cgtA gene function in DNA replication of extrachromosomal elements in Escherichia coli.</title>
        <authorList>
            <person name="Ulanowska K."/>
            <person name="Sikora A."/>
            <person name="Wegrzyn G."/>
            <person name="Czyz A."/>
        </authorList>
    </citation>
    <scope>FUNCTION IN PLASMID REPLICATION</scope>
    <source>
        <strain>K12 / MG1655 / ATCC 47076</strain>
    </source>
</reference>
<reference key="9">
    <citation type="journal article" date="2004" name="J. Bacteriol.">
        <title>The Escherichia coli GTPase CgtAE cofractionates with the 50S ribosomal subunit and interacts with SpoT, a ppGpp synthetase/hydrolase.</title>
        <authorList>
            <person name="Wout P."/>
            <person name="Pu K."/>
            <person name="Sullivan S.M."/>
            <person name="Reese V."/>
            <person name="Zhou S."/>
            <person name="Lin B."/>
            <person name="Maddock J.R."/>
        </authorList>
    </citation>
    <scope>SUBCELLULAR LOCATION</scope>
    <scope>RIBOSOMAL-ASSOCIATION</scope>
    <scope>BIOPHYSICOCHEMICAL PROPERTIES</scope>
    <scope>INTERACTION WITH SPOT</scope>
    <source>
        <strain>K12 / W3110 / ATCC 27325 / DSM 5911</strain>
    </source>
</reference>
<reference key="10">
    <citation type="journal article" date="2005" name="Genes Cells">
        <title>The GTP binding protein Obg homolog ObgE is involved in ribosome maturation.</title>
        <authorList>
            <person name="Sato A."/>
            <person name="Kobayashi G."/>
            <person name="Hayashi H."/>
            <person name="Yoshida H."/>
            <person name="Wada A."/>
            <person name="Maeda M."/>
            <person name="Hiraga S."/>
            <person name="Takeyasu K."/>
            <person name="Wada C."/>
        </authorList>
    </citation>
    <scope>FUNCTION IN RIBOSOME BIOGENESIS</scope>
    <scope>RRNA-BINDING</scope>
    <scope>INDUCTION</scope>
    <scope>ASSOCIATION WITH 30S AND 50S RIBOSOMAL SUBUNITS</scope>
    <scope>MUTAGENESIS OF SER-314</scope>
    <source>
        <strain>K12</strain>
    </source>
</reference>
<reference key="11">
    <citation type="journal article" date="2005" name="Mol. Cell">
        <title>A bacterial G protein-mediated response to replication arrest.</title>
        <authorList>
            <person name="Foti J.J."/>
            <person name="Schienda J."/>
            <person name="Sutera V.A. Jr."/>
            <person name="Lovett S.T."/>
        </authorList>
    </citation>
    <scope>MUTAGENESIS OF PRO-168</scope>
    <scope>POSSIBLE FUNCTION IN REPLICATION FORK STABILITY</scope>
    <source>
        <strain>K12 / MG1655 / ATCC 47076</strain>
    </source>
</reference>
<reference key="12">
    <citation type="journal article" date="2006" name="Arch. Microbiol.">
        <title>DNA replication defect in the Escherichia coli cgtA(ts) mutant arising from reduced DnaA levels.</title>
        <authorList>
            <person name="Sikora A.E."/>
            <person name="Zielke R."/>
            <person name="Wegrzyn A."/>
            <person name="Wegrzyn G."/>
        </authorList>
    </citation>
    <scope>FUNCTION IN DNAA REGULATION</scope>
    <source>
        <strain>K12 / MG1655 / ATCC 47076</strain>
    </source>
</reference>
<reference key="13">
    <citation type="journal article" date="2006" name="J. Bacteriol.">
        <title>The Escherichia coli GTPase CgtAE is involved in late steps of large ribosome assembly.</title>
        <authorList>
            <person name="Jiang M."/>
            <person name="Datta K."/>
            <person name="Walker A."/>
            <person name="Strahler J."/>
            <person name="Bagamasbad P."/>
            <person name="Andrews P.C."/>
            <person name="Maddock J.R."/>
        </authorList>
    </citation>
    <scope>FUNCTION IN LATE STAGES OF 50S RIBOSOMAL SUBUNIT ASSEMBLY</scope>
    <source>
        <strain>K12 / MG1655 / ATCC 47076</strain>
    </source>
</reference>
<reference key="14">
    <citation type="journal article" date="2007" name="J. Bacteriol.">
        <title>G-protein control of the ribosome-associated stress response protein SpoT.</title>
        <authorList>
            <person name="Jiang M."/>
            <person name="Sullivan S.M."/>
            <person name="Wout P.K."/>
            <person name="Maddock J.R."/>
        </authorList>
    </citation>
    <scope>FUNCTION UNDER AMINO ACID STARVATION</scope>
    <scope>ASSOCIATION WITH SPOT</scope>
    <source>
        <strain>K12</strain>
    </source>
</reference>
<reference key="15">
    <citation type="journal article" date="2007" name="Mol. Microbiol.">
        <title>Chromosome segregation control by Escherichia coli ObgE GTPase.</title>
        <authorList>
            <person name="Foti J.J."/>
            <person name="Persky N.S."/>
            <person name="Ferullo D.J."/>
            <person name="Lovett S.T."/>
        </authorList>
    </citation>
    <scope>FUNCTION IN CHROMOSOME SEGREGATION</scope>
    <source>
        <strain>K12 / MG1655 / ATCC 47076</strain>
    </source>
</reference>
<reference key="16">
    <citation type="journal article" date="2009" name="Mol. Microbiol.">
        <title>The ObgE/CgtA GTPase influences the stringent response to amino acid starvation in Escherichia coli.</title>
        <authorList>
            <person name="Persky N.S."/>
            <person name="Ferullo D.J."/>
            <person name="Cooper D.L."/>
            <person name="Moore H.R."/>
            <person name="Lovett S.T."/>
        </authorList>
    </citation>
    <scope>FUNCTION IN STRINGENT RESPONSE</scope>
    <scope>PPGPP-BINDING</scope>
    <scope>POSSIBLE ROLE IN INHIBITION OF DNA REPLICATION</scope>
    <source>
        <strain>K12 / MG1655 / ATCC 47076</strain>
    </source>
</reference>
<reference key="17">
    <citation type="journal article" date="2012" name="FEBS J.">
        <title>The Escherichia coli GTPase ObgE modulates hydroxyl radical levels in response to DNA replication fork arrest.</title>
        <authorList>
            <person name="Kint C.I."/>
            <person name="Verstraeten N."/>
            <person name="Wens I."/>
            <person name="Liebens V.R."/>
            <person name="Hofkens J."/>
            <person name="Versees W."/>
            <person name="Fauvart M."/>
            <person name="Michiels J."/>
        </authorList>
    </citation>
    <scope>FUNCTION</scope>
    <scope>DOMAIN</scope>
    <scope>MUTAGENESIS OF LEU-159; GLY-163; PRO-168; GLY-216 AND ARG-237</scope>
</reference>
<reference key="18">
    <citation type="journal article" date="2015" name="Mol. Cell">
        <title>Obg and membrane depolarization are part of a microbial bet-hedging strategy that leads to antibiotic tolerance.</title>
        <authorList>
            <person name="Verstraeten N."/>
            <person name="Knapen W.J."/>
            <person name="Kint C.I."/>
            <person name="Liebens V."/>
            <person name="Van den Bergh B."/>
            <person name="Dewachter L."/>
            <person name="Michiels J.E."/>
            <person name="Fu Q."/>
            <person name="David C.C."/>
            <person name="Fierro A.C."/>
            <person name="Marchal K."/>
            <person name="Beirlant J."/>
            <person name="Versees W."/>
            <person name="Hofkens J."/>
            <person name="Jansen M."/>
            <person name="Fauvart M."/>
            <person name="Michiels J."/>
        </authorList>
    </citation>
    <scope>FUNCTION IN PERSISTENCE</scope>
    <scope>MUTAGENESIS OF GLY-93; GLY-166; PRO-168; SER-173; THR-193 AND GLY-216</scope>
    <source>
        <strain>K12 / BW25113</strain>
        <strain>TOP10</strain>
    </source>
</reference>
<reference key="19">
    <citation type="journal article" date="2005" name="Acta Biochim. Pol.">
        <title>The Obg subfamily of bacterial GTP-binding proteins: essential proteins of largely unknown functions that are evolutionarily conserved from bacteria to humans.</title>
        <authorList>
            <person name="Czyz A."/>
            <person name="Wegrzyn G."/>
        </authorList>
    </citation>
    <scope>REVIEW</scope>
</reference>
<reference key="20">
    <citation type="journal article" date="2005" name="Dev. Cell">
        <title>Obg/CtgA, a signaling protein that controls replication, translation, and morphological development?</title>
        <authorList>
            <person name="Michel B."/>
        </authorList>
    </citation>
    <scope>REVIEW</scope>
</reference>
<reference evidence="27" key="21">
    <citation type="journal article" date="2014" name="PLoS Biol.">
        <title>Structural and functional insights into the mode of action of a universally conserved Obg GTPase.</title>
        <authorList>
            <person name="Feng B."/>
            <person name="Mandava C.S."/>
            <person name="Guo Q."/>
            <person name="Wang J."/>
            <person name="Cao W."/>
            <person name="Li N."/>
            <person name="Zhang Y."/>
            <person name="Zhang Y."/>
            <person name="Wang Z."/>
            <person name="Wu J."/>
            <person name="Sanyal S."/>
            <person name="Lei J."/>
            <person name="Gao N."/>
        </authorList>
    </citation>
    <scope>STRUCTURE BY ELECTRON MICROSCOPY (5.5 ANGSTROMS) IN COMPLEX WITH 50S RIBOSOMAL SUBUNIT AND GMP-PNP</scope>
    <scope>FUNCTION</scope>
    <scope>DOMAIN</scope>
    <scope>RRNA-BINDING</scope>
    <scope>MUTAGENESIS OF 27-LYS--LYS-31; 76-ARG--ARG-82 AND 136-ARG--ARG-139</scope>
    <source>
        <strain>K12 / DH5-alpha</strain>
    </source>
</reference>
<reference evidence="28 29 30 31 32" key="22">
    <citation type="journal article" date="2021" name="Mol. Cell">
        <title>Snapshots of native pre-50S ribosomes reveal a biogenesis factor network and evolutionary specialization.</title>
        <authorList>
            <person name="Nikolay R."/>
            <person name="Hilal T."/>
            <person name="Schmidt S."/>
            <person name="Qin B."/>
            <person name="Schwefel D."/>
            <person name="Vieira-Vieira C.H."/>
            <person name="Mielke T."/>
            <person name="Burger J."/>
            <person name="Loerke J."/>
            <person name="Amikura K."/>
            <person name="Flugel T."/>
            <person name="Ueda T."/>
            <person name="Selbach M."/>
            <person name="Deuerling E."/>
            <person name="Spahn C.M.T."/>
        </authorList>
    </citation>
    <scope>STRUCTURE BY ELECTRON MICROSCOPY (2.40 ANGSTROMS) IN ASSOCIATION WITH PRE-50S RIBOSOMAL SUBUNIT</scope>
    <scope>FUNCTION IN 50S RIBOSOMAL SUBUNIT BIOGENESIS</scope>
    <scope>CATALYTIC ACTIVITY</scope>
    <scope>SUBUNIT</scope>
    <scope>SUBCELLULAR LOCATION</scope>
    <scope>23S RRNA-BINDING</scope>
    <scope>MUTAGENESIS OF ARG-25 AND ARG-60</scope>
    <source>
        <strain>K12 / MG1655 / ATCC 47076</strain>
    </source>
</reference>
<name>OBG_ECOLI</name>
<sequence length="390" mass="43286">MKFVDEASILVVAGDGGNGCVSFRREKYIPKGGPDGGDGGDGGDVWMEADENLNTLIDYRFEKSFRAERGQNGASRDCTGKRGKDVTIKVPVGTRVIDQGTGETMGDMTKHGQRLLVAKGGWHGLGNTRFKSSVNRTPRQKTNGTPGDKRELLLELMLLADVGMLGMPNAGKSTFIRAVSAAKPKVADYPFTTLVPSLGVVRMDNEKSFVVADIPGLIEGAAEGAGLGIRFLKHLERCRVLLHLIDIDPIDGTDPVENARIIISELEKYSQDLATKPRWLVFNKIDLLDKVEAEEKAKAIAEALGWEDKYYLISAASGLGVKDLCWDVMTFIIENPVVQAEEAKQPEKVEFMWDDYHRQQLEEIAEEDDEDWDDDWDEDDEEGVEFIYKR</sequence>